<dbReference type="EMBL" id="Y10634">
    <property type="protein sequence ID" value="CAA71659.1"/>
    <property type="molecule type" value="Genomic_DNA"/>
</dbReference>
<dbReference type="SMR" id="P79165"/>
<dbReference type="STRING" id="9796.ENSECAP00000021228"/>
<dbReference type="PaxDb" id="9796-ENSECAP00000021228"/>
<dbReference type="InParanoid" id="P79165"/>
<dbReference type="Proteomes" id="UP000002281">
    <property type="component" value="Unplaced"/>
</dbReference>
<dbReference type="GO" id="GO:0016324">
    <property type="term" value="C:apical plasma membrane"/>
    <property type="evidence" value="ECO:0000250"/>
    <property type="project" value="UniProtKB"/>
</dbReference>
<dbReference type="GO" id="GO:0016323">
    <property type="term" value="C:basolateral plasma membrane"/>
    <property type="evidence" value="ECO:0007669"/>
    <property type="project" value="UniProtKB-SubCell"/>
</dbReference>
<dbReference type="GO" id="GO:0030659">
    <property type="term" value="C:cytoplasmic vesicle membrane"/>
    <property type="evidence" value="ECO:0007669"/>
    <property type="project" value="UniProtKB-SubCell"/>
</dbReference>
<dbReference type="GO" id="GO:0005794">
    <property type="term" value="C:Golgi apparatus"/>
    <property type="evidence" value="ECO:0007669"/>
    <property type="project" value="UniProtKB-SubCell"/>
</dbReference>
<dbReference type="GO" id="GO:0005886">
    <property type="term" value="C:plasma membrane"/>
    <property type="evidence" value="ECO:0000250"/>
    <property type="project" value="UniProtKB"/>
</dbReference>
<dbReference type="GO" id="GO:0015250">
    <property type="term" value="F:water channel activity"/>
    <property type="evidence" value="ECO:0000250"/>
    <property type="project" value="UniProtKB"/>
</dbReference>
<dbReference type="GO" id="GO:0051289">
    <property type="term" value="P:protein homotetramerization"/>
    <property type="evidence" value="ECO:0000250"/>
    <property type="project" value="UniProtKB"/>
</dbReference>
<dbReference type="GO" id="GO:0006833">
    <property type="term" value="P:water transport"/>
    <property type="evidence" value="ECO:0000250"/>
    <property type="project" value="UniProtKB"/>
</dbReference>
<dbReference type="FunFam" id="1.20.1080.10:FF:000032">
    <property type="entry name" value="Aquaporin-2"/>
    <property type="match status" value="1"/>
</dbReference>
<dbReference type="Gene3D" id="1.20.1080.10">
    <property type="entry name" value="Glycerol uptake facilitator protein"/>
    <property type="match status" value="1"/>
</dbReference>
<dbReference type="InterPro" id="IPR023271">
    <property type="entry name" value="Aquaporin-like"/>
</dbReference>
<dbReference type="InterPro" id="IPR034294">
    <property type="entry name" value="Aquaporin_transptr"/>
</dbReference>
<dbReference type="InterPro" id="IPR000425">
    <property type="entry name" value="MIP"/>
</dbReference>
<dbReference type="InterPro" id="IPR022357">
    <property type="entry name" value="MIP_CS"/>
</dbReference>
<dbReference type="PANTHER" id="PTHR19139">
    <property type="entry name" value="AQUAPORIN TRANSPORTER"/>
    <property type="match status" value="1"/>
</dbReference>
<dbReference type="PANTHER" id="PTHR19139:SF45">
    <property type="entry name" value="AQUAPORIN-2"/>
    <property type="match status" value="1"/>
</dbReference>
<dbReference type="Pfam" id="PF00230">
    <property type="entry name" value="MIP"/>
    <property type="match status" value="1"/>
</dbReference>
<dbReference type="PRINTS" id="PR00783">
    <property type="entry name" value="MINTRINSICP"/>
</dbReference>
<dbReference type="SUPFAM" id="SSF81338">
    <property type="entry name" value="Aquaporin-like"/>
    <property type="match status" value="1"/>
</dbReference>
<dbReference type="PROSITE" id="PS00221">
    <property type="entry name" value="MIP"/>
    <property type="match status" value="1"/>
</dbReference>
<comment type="function">
    <text evidence="2">Forms a water-specific channel that provides the plasma membranes of renal collecting duct with high permeability to water, thereby permitting water to move in the direction of an osmotic gradient. Plays an essential role in renal water homeostasis. Could also be permeable to glycerol.</text>
</comment>
<comment type="catalytic activity">
    <reaction evidence="2">
        <text>H2O(in) = H2O(out)</text>
        <dbReference type="Rhea" id="RHEA:29667"/>
        <dbReference type="ChEBI" id="CHEBI:15377"/>
    </reaction>
</comment>
<comment type="catalytic activity">
    <reaction evidence="2">
        <text>glycerol(in) = glycerol(out)</text>
        <dbReference type="Rhea" id="RHEA:29675"/>
        <dbReference type="ChEBI" id="CHEBI:17754"/>
    </reaction>
</comment>
<comment type="subunit">
    <text evidence="2">Homotetramer.</text>
</comment>
<comment type="subcellular location">
    <subcellularLocation>
        <location evidence="2">Apical cell membrane</location>
        <topology evidence="2">Multi-pass membrane protein</topology>
    </subcellularLocation>
    <subcellularLocation>
        <location evidence="1">Basolateral cell membrane</location>
        <topology evidence="2">Multi-pass membrane protein</topology>
    </subcellularLocation>
    <subcellularLocation>
        <location evidence="2">Cell membrane</location>
        <topology evidence="2">Multi-pass membrane protein</topology>
    </subcellularLocation>
    <subcellularLocation>
        <location evidence="2">Cytoplasmic vesicle membrane</location>
        <topology evidence="2">Multi-pass membrane protein</topology>
    </subcellularLocation>
    <subcellularLocation>
        <location evidence="2">Golgi apparatus</location>
        <location evidence="2">trans-Golgi network membrane</location>
        <topology evidence="2">Multi-pass membrane protein</topology>
    </subcellularLocation>
    <text evidence="2">Shuttles from vesicles to the apical membrane. Vasopressin-regulated phosphorylation is required for translocation to the apical cell membrane. PLEKHA8/FAPP2 is required to transport AQP2 from the TGN to sites where AQP2 is phosphorylated.</text>
</comment>
<comment type="domain">
    <text evidence="2">Aquaporins contain two tandem repeats each containing three membrane-spanning domains and a pore-forming loop with the signature motif Asn-Pro-Ala (NPA).</text>
</comment>
<comment type="PTM">
    <text evidence="2">Serine phosphorylation is necessary and sufficient for expression at the apical membrane. Endocytosis is not phosphorylation-dependent.</text>
</comment>
<comment type="PTM">
    <text evidence="2">N-glycosylated.</text>
</comment>
<comment type="similarity">
    <text evidence="4">Belongs to the MIP/aquaporin (TC 1.A.8) family.</text>
</comment>
<keyword id="KW-1003">Cell membrane</keyword>
<keyword id="KW-0968">Cytoplasmic vesicle</keyword>
<keyword id="KW-0325">Glycoprotein</keyword>
<keyword id="KW-0333">Golgi apparatus</keyword>
<keyword id="KW-0472">Membrane</keyword>
<keyword id="KW-0597">Phosphoprotein</keyword>
<keyword id="KW-1185">Reference proteome</keyword>
<keyword id="KW-0812">Transmembrane</keyword>
<keyword id="KW-1133">Transmembrane helix</keyword>
<keyword id="KW-0813">Transport</keyword>
<reference key="1">
    <citation type="journal article" date="1997" name="Mol. Biol. Evol.">
        <title>Molecular evolution of mammalian aquaporin-2: further evidence that elephant shrew and aardvark join the paenungulate clade.</title>
        <authorList>
            <person name="Madsen O.J."/>
            <person name="Deen P.M.T."/>
            <person name="Pesole G."/>
            <person name="Saccone C."/>
            <person name="de Jong W.W."/>
        </authorList>
    </citation>
    <scope>NUCLEOTIDE SEQUENCE [GENOMIC DNA]</scope>
</reference>
<gene>
    <name evidence="2" type="primary">AQP2</name>
</gene>
<protein>
    <recommendedName>
        <fullName evidence="3">Aquaporin-2</fullName>
        <shortName>AQP-2</shortName>
    </recommendedName>
    <alternativeName>
        <fullName>ADH water channel</fullName>
    </alternativeName>
    <alternativeName>
        <fullName>Aquaporin-CD</fullName>
        <shortName>AQP-CD</shortName>
    </alternativeName>
    <alternativeName>
        <fullName>Collecting duct water channel protein</fullName>
    </alternativeName>
    <alternativeName>
        <fullName>WCH-CD</fullName>
    </alternativeName>
    <alternativeName>
        <fullName>Water channel protein for renal collecting duct</fullName>
    </alternativeName>
</protein>
<accession>P79165</accession>
<evidence type="ECO:0000250" key="1">
    <source>
        <dbReference type="UniProtKB" id="P34080"/>
    </source>
</evidence>
<evidence type="ECO:0000250" key="2">
    <source>
        <dbReference type="UniProtKB" id="P41181"/>
    </source>
</evidence>
<evidence type="ECO:0000303" key="3">
    <source>
    </source>
</evidence>
<evidence type="ECO:0000305" key="4"/>
<name>AQP2_HORSE</name>
<organism>
    <name type="scientific">Equus caballus</name>
    <name type="common">Horse</name>
    <dbReference type="NCBI Taxonomy" id="9796"/>
    <lineage>
        <taxon>Eukaryota</taxon>
        <taxon>Metazoa</taxon>
        <taxon>Chordata</taxon>
        <taxon>Craniata</taxon>
        <taxon>Vertebrata</taxon>
        <taxon>Euteleostomi</taxon>
        <taxon>Mammalia</taxon>
        <taxon>Eutheria</taxon>
        <taxon>Laurasiatheria</taxon>
        <taxon>Perissodactyla</taxon>
        <taxon>Equidae</taxon>
        <taxon>Equus</taxon>
    </lineage>
</organism>
<feature type="chain" id="PRO_0000063933" description="Aquaporin-2">
    <location>
        <begin position="1" status="less than"/>
        <end position="109" status="greater than"/>
    </location>
</feature>
<feature type="topological domain" description="Cytoplasmic" evidence="4">
    <location>
        <begin position="1" status="less than"/>
        <end position="6"/>
    </location>
</feature>
<feature type="transmembrane region" description="Helical" evidence="2">
    <location>
        <begin position="7"/>
        <end position="27"/>
    </location>
</feature>
<feature type="topological domain" description="Extracellular" evidence="4">
    <location>
        <begin position="28"/>
        <end position="35"/>
    </location>
</feature>
<feature type="transmembrane region" description="Helical" evidence="2">
    <location>
        <begin position="36"/>
        <end position="54"/>
    </location>
</feature>
<feature type="topological domain" description="Cytoplasmic" evidence="4">
    <location>
        <begin position="55"/>
        <end position="59"/>
    </location>
</feature>
<feature type="intramembrane region" description="Discontinuously helical" evidence="2">
    <location>
        <begin position="60"/>
        <end position="69"/>
    </location>
</feature>
<feature type="topological domain" description="Cytoplasmic" evidence="4">
    <location>
        <begin position="70"/>
        <end position="80"/>
    </location>
</feature>
<feature type="transmembrane region" description="Helical" evidence="2">
    <location>
        <begin position="81"/>
        <end position="102"/>
    </location>
</feature>
<feature type="topological domain" description="Extracellular" evidence="4">
    <location>
        <begin position="103"/>
        <end position="109" status="greater than"/>
    </location>
</feature>
<feature type="short sequence motif" description="NPA 1" evidence="2">
    <location>
        <begin position="63"/>
        <end position="65"/>
    </location>
</feature>
<feature type="non-terminal residue">
    <location>
        <position position="1"/>
    </location>
</feature>
<feature type="non-terminal residue">
    <location>
        <position position="109"/>
    </location>
</feature>
<sequence length="109" mass="11299">SIAFSRAVLAEFLATLLFVFFGLGSALNWPQAMPSVLQIAMAFGLAIGTLVQALGHVSGAHINPAVTVACLVGCHVSFLRAAFYVAAQLLGAVAGAALLHEITPPDIRR</sequence>
<proteinExistence type="inferred from homology"/>